<organism evidence="7">
    <name type="scientific">Xylella fastidiosa (strain Temecula1 / ATCC 700964)</name>
    <dbReference type="NCBI Taxonomy" id="183190"/>
    <lineage>
        <taxon>Bacteria</taxon>
        <taxon>Pseudomonadati</taxon>
        <taxon>Pseudomonadota</taxon>
        <taxon>Gammaproteobacteria</taxon>
        <taxon>Lysobacterales</taxon>
        <taxon>Lysobacteraceae</taxon>
        <taxon>Xylella</taxon>
    </lineage>
</organism>
<evidence type="ECO:0000250" key="1">
    <source>
        <dbReference type="UniProtKB" id="S0HPF7"/>
    </source>
</evidence>
<evidence type="ECO:0000256" key="2">
    <source>
        <dbReference type="SAM" id="MobiDB-lite"/>
    </source>
</evidence>
<evidence type="ECO:0000269" key="3">
    <source>
    </source>
</evidence>
<evidence type="ECO:0000303" key="4">
    <source>
    </source>
</evidence>
<evidence type="ECO:0000305" key="5"/>
<evidence type="ECO:0000305" key="6">
    <source>
    </source>
</evidence>
<evidence type="ECO:0000312" key="7">
    <source>
        <dbReference type="EMBL" id="AAO29451.1"/>
    </source>
</evidence>
<evidence type="ECO:0000312" key="8">
    <source>
        <dbReference type="Proteomes" id="UP000002516"/>
    </source>
</evidence>
<proteinExistence type="evidence at protein level"/>
<feature type="chain" id="PRO_0000431918" description="Type IV pilus biogenesis factor PilY1 homolog PD_1611">
    <location>
        <begin position="1"/>
        <end position="1472"/>
    </location>
</feature>
<feature type="region of interest" description="Disordered" evidence="2">
    <location>
        <begin position="1383"/>
        <end position="1403"/>
    </location>
</feature>
<feature type="compositionally biased region" description="Polar residues" evidence="2">
    <location>
        <begin position="1383"/>
        <end position="1397"/>
    </location>
</feature>
<feature type="binding site" evidence="1">
    <location>
        <position position="1170"/>
    </location>
    <ligand>
        <name>Ca(2+)</name>
        <dbReference type="ChEBI" id="CHEBI:29108"/>
    </ligand>
</feature>
<feature type="binding site" evidence="1">
    <location>
        <position position="1172"/>
    </location>
    <ligand>
        <name>Ca(2+)</name>
        <dbReference type="ChEBI" id="CHEBI:29108"/>
    </ligand>
</feature>
<feature type="binding site" evidence="1">
    <location>
        <position position="1174"/>
    </location>
    <ligand>
        <name>Ca(2+)</name>
        <dbReference type="ChEBI" id="CHEBI:29108"/>
    </ligand>
</feature>
<feature type="binding site" evidence="1">
    <location>
        <position position="1176"/>
    </location>
    <ligand>
        <name>Ca(2+)</name>
        <dbReference type="ChEBI" id="CHEBI:29108"/>
    </ligand>
</feature>
<feature type="binding site" evidence="1">
    <location>
        <position position="1178"/>
    </location>
    <ligand>
        <name>Ca(2+)</name>
        <dbReference type="ChEBI" id="CHEBI:29108"/>
    </ligand>
</feature>
<accession>Q87B49</accession>
<reference evidence="7 8" key="1">
    <citation type="journal article" date="2003" name="J. Bacteriol.">
        <title>Comparative analyses of the complete genome sequences of Pierce's disease and citrus variegated chlorosis strains of Xylella fastidiosa.</title>
        <authorList>
            <person name="Van Sluys M.A."/>
            <person name="de Oliveira M.C."/>
            <person name="Monteiro-Vitorello C.B."/>
            <person name="Miyaki C.Y."/>
            <person name="Furlan L.R."/>
            <person name="Camargo L.E.A."/>
            <person name="da Silva A.C.R."/>
            <person name="Moon D.H."/>
            <person name="Takita M.A."/>
            <person name="Lemos E.G.M."/>
            <person name="Machado M.A."/>
            <person name="Ferro M.I.T."/>
            <person name="da Silva F.R."/>
            <person name="Goldman M.H.S."/>
            <person name="Goldman G.H."/>
            <person name="Lemos M.V.F."/>
            <person name="El-Dorry H."/>
            <person name="Tsai S.M."/>
            <person name="Carrer H."/>
            <person name="Carraro D.M."/>
            <person name="de Oliveira R.C."/>
            <person name="Nunes L.R."/>
            <person name="Siqueira W.J."/>
            <person name="Coutinho L.L."/>
            <person name="Kimura E.T."/>
            <person name="Ferro E.S."/>
            <person name="Harakava R."/>
            <person name="Kuramae E.E."/>
            <person name="Marino C.L."/>
            <person name="Giglioti E."/>
            <person name="Abreu I.L."/>
            <person name="Alves L.M.C."/>
            <person name="do Amaral A.M."/>
            <person name="Baia G.S."/>
            <person name="Blanco S.R."/>
            <person name="Brito M.S."/>
            <person name="Cannavan F.S."/>
            <person name="Celestino A.V."/>
            <person name="da Cunha A.F."/>
            <person name="Fenille R.C."/>
            <person name="Ferro J.A."/>
            <person name="Formighieri E.F."/>
            <person name="Kishi L.T."/>
            <person name="Leoni S.G."/>
            <person name="Oliveira A.R."/>
            <person name="Rosa V.E. Jr."/>
            <person name="Sassaki F.T."/>
            <person name="Sena J.A.D."/>
            <person name="de Souza A.A."/>
            <person name="Truffi D."/>
            <person name="Tsukumo F."/>
            <person name="Yanai G.M."/>
            <person name="Zaros L.G."/>
            <person name="Civerolo E.L."/>
            <person name="Simpson A.J.G."/>
            <person name="Almeida N.F. Jr."/>
            <person name="Setubal J.C."/>
            <person name="Kitajima J.P."/>
        </authorList>
    </citation>
    <scope>NUCLEOTIDE SEQUENCE [LARGE SCALE GENOMIC DNA]</scope>
    <source>
        <strain evidence="8">Temecula1 / ATCC 700964</strain>
    </source>
</reference>
<reference key="2">
    <citation type="journal article" date="2014" name="Appl. Environ. Microbiol.">
        <title>Calcium-enhanced twitching motility in Xylella fastidiosa is linked to a single PilY1 homolog.</title>
        <authorList>
            <person name="Cruz L.F."/>
            <person name="Parker J.K."/>
            <person name="Cobine P.A."/>
            <person name="De La Fuente L."/>
        </authorList>
    </citation>
    <scope>FUNCTION</scope>
    <scope>CALCIUM-BINDING</scope>
    <scope>INDUCTION</scope>
    <scope>DISRUPTION PHENOTYPE</scope>
    <source>
        <strain evidence="4">Temecula1 / ATCC 700964</strain>
    </source>
</reference>
<dbReference type="EMBL" id="AE009442">
    <property type="protein sequence ID" value="AAO29451.1"/>
    <property type="molecule type" value="Genomic_DNA"/>
</dbReference>
<dbReference type="SMR" id="Q87B49"/>
<dbReference type="KEGG" id="xft:PD_1611"/>
<dbReference type="HOGENOM" id="CLU_001890_0_1_6"/>
<dbReference type="Proteomes" id="UP000002516">
    <property type="component" value="Chromosome"/>
</dbReference>
<dbReference type="GO" id="GO:0044096">
    <property type="term" value="C:type IV pilus"/>
    <property type="evidence" value="ECO:0000305"/>
    <property type="project" value="UniProtKB"/>
</dbReference>
<dbReference type="GO" id="GO:0046872">
    <property type="term" value="F:metal ion binding"/>
    <property type="evidence" value="ECO:0007669"/>
    <property type="project" value="UniProtKB-KW"/>
</dbReference>
<dbReference type="GO" id="GO:0043107">
    <property type="term" value="P:type IV pilus-dependent motility"/>
    <property type="evidence" value="ECO:0000315"/>
    <property type="project" value="UniProtKB"/>
</dbReference>
<dbReference type="InterPro" id="IPR008707">
    <property type="entry name" value="PilY1_beta_prop_dom"/>
</dbReference>
<dbReference type="InterPro" id="IPR011047">
    <property type="entry name" value="Quinoprotein_ADH-like_sf"/>
</dbReference>
<dbReference type="Pfam" id="PF05567">
    <property type="entry name" value="T4P_PilY1"/>
    <property type="match status" value="1"/>
</dbReference>
<dbReference type="SUPFAM" id="SSF50998">
    <property type="entry name" value="Quinoprotein alcohol dehydrogenase-like"/>
    <property type="match status" value="1"/>
</dbReference>
<comment type="function">
    <text evidence="3 6">One of the three PilY1 homologs of X.fastidiosa, which are involved in bacterial twitching motility as component of the filamentous type IV pili (T4P). The twitching motility of this protein is enhanced by calcium, which may provide the bacterium an adaptive advantage in environments with high calcium concentrations.</text>
</comment>
<comment type="subcellular location">
    <subcellularLocation>
        <location evidence="6">Fimbrium</location>
    </subcellularLocation>
</comment>
<comment type="induction">
    <text evidence="3">Expression is not affected by calcium.</text>
</comment>
<comment type="disruption phenotype">
    <text evidence="3">Shows twitching motility. Loss of increased twitching motility at higher Ca(2+) concentrations. Forms T4P. Impaired in the calcium-mediated increase in single-cell attachment to surfaces, but biofilm formation is not affected.</text>
</comment>
<comment type="similarity">
    <text evidence="5">Belongs to the PilY1 family.</text>
</comment>
<keyword id="KW-0106">Calcium</keyword>
<keyword id="KW-0281">Fimbrium</keyword>
<keyword id="KW-1029">Fimbrium biogenesis</keyword>
<keyword id="KW-0479">Metal-binding</keyword>
<keyword id="KW-1185">Reference proteome</keyword>
<name>PIYH1_XYLFT</name>
<protein>
    <recommendedName>
        <fullName evidence="1 4">Type IV pilus biogenesis factor PilY1 homolog PD_1611</fullName>
    </recommendedName>
</protein>
<gene>
    <name evidence="7" type="primary">pilY1_1</name>
    <name evidence="7" type="ordered locus">PD_1611</name>
</gene>
<sequence>MLVMGRDHKLYYEAYNDASDLDGDGVLDVGYKPDKITYYGYYNSNVCYRANGTMFQAMSVANGSNGKKCTGAWSGDFLNYLTTSRMDALRKVLFGGYREVDTLTQTILRASYTPQDAHSWGKEYASVSHDGYDISDYAPLSAPGSGHYHLFAVTTLSDNGIPQLRVLADTTFRVWNWVSIERPVAGSDCFTPENKRVSCVSGGSRGISDYPLRVEVCSVADELRESNCKLYQNNTSYKPTGILHDYGENDRMYFGLLTGSYQKNITGGVLHSNVSNFSREINPLTGQFCLNGNCGGGGDVKGIVHTISSFRMLDFNYKDYTYGCGWIATRPVKEGECWMWGNPVAEMMYETLRYFGGATAPRPEYDINSSSQDIATLQLSHPGWKPPYTSVDKGGSGYSVCAQPTMTVFSDINPSYDDKLPGSHWSNFSGSGDPASMRNLDVSAEADRIWEAEGGGSKLFFIGESNNNSDNAPTPKVVSNLSTVRGLSPEEPSKGGTYYSAAVARYGANHKMGGSKFVRTYAVALASPLPKFEFPVGNARVSLVPFAKSVRGFGISATGNFQPTNQIIDFYVQRVANMAGSSGADYDATINGGRPYAEFRINYEDVEQGADHDMDAIALYTIYVNAKNQLVVTLKSEYSAGSIDQHMGYVISGTTRDGVYLEICDLADGHSNDGTRSSCAGQQPYKLNTPPNRLPGYCNATPMPGDCNGLPPVATRIFSVASQGANAVLLKDPLWYAAKYGHDQGVILNSSGGLANYFPVNNALYLRQQVAKAFSAIQSQAGSSGSIAVVGASVSSTSFAVIPSYSSTHDGKDWTGEMTAYRIDANGMIGDVLWLASAGVPSGTSAIAKRVIYTALSHVDDTNRASVVRRFVAEKLVDSSSGDVATDAAQVFGRLGYTPRGVIDDFGSSVTPNQLVNYLRGDKRMEGATLNTAPFRRRFGPLGDMINSIPVVATRRANYGWATASGLPQVQRDSYSAFINARQNSTAAEHIFVGANDGMLHAFDDKGTERFAYVPNGVLHHLGFLANPEYQHHYYVDGKSTLSDAYLDGSWRSVLVGGTGAGGRSMFALDVTSPSTFNESNVLWEMNSENDDDMGYTMGKPYIVPLQNGSWAAIFGNGYNSTNGRAVLFIVNLATGQLIRKIEARDGIDPDGSDPANMGYNGLGNLAVLDTDGDGLVDMVYGADLHGNLWKFNLSGKDPQRWGIAYKDGLGNPIPLFVARNPQGYRQPITGGLEVAVGPSAGYIIYFGSGRYFAANDNNSKDLSTLYGIWDSGSPVIAGRAALSAQIIQASDHPTSPDTRIVTRRPLSYLSKHGWYVDLVVQGQDPQGERSIATPLLQGGRVFFSTYVPGVSVNCASGGSNWLYVLDAASGGAALGQVNIPSRGSRSSIGNSDTGAVSTGGDAPIQSVAMTRTAPRQPVFCNPGEQGCPLVPETHAAPLDTRCSEVIIDPNDPTRSISLFRACGRQSWRQLR</sequence>